<name>PURA_THEYD</name>
<reference key="1">
    <citation type="submission" date="2008-08" db="EMBL/GenBank/DDBJ databases">
        <title>The complete genome sequence of Thermodesulfovibrio yellowstonii strain ATCC 51303 / DSM 11347 / YP87.</title>
        <authorList>
            <person name="Dodson R.J."/>
            <person name="Durkin A.S."/>
            <person name="Wu M."/>
            <person name="Eisen J."/>
            <person name="Sutton G."/>
        </authorList>
    </citation>
    <scope>NUCLEOTIDE SEQUENCE [LARGE SCALE GENOMIC DNA]</scope>
    <source>
        <strain>ATCC 51303 / DSM 11347 / YP87</strain>
    </source>
</reference>
<accession>B5YKK9</accession>
<feature type="chain" id="PRO_1000089349" description="Adenylosuccinate synthetase">
    <location>
        <begin position="1"/>
        <end position="425"/>
    </location>
</feature>
<feature type="active site" description="Proton acceptor" evidence="1">
    <location>
        <position position="13"/>
    </location>
</feature>
<feature type="active site" description="Proton donor" evidence="1">
    <location>
        <position position="41"/>
    </location>
</feature>
<feature type="binding site" evidence="1">
    <location>
        <begin position="12"/>
        <end position="18"/>
    </location>
    <ligand>
        <name>GTP</name>
        <dbReference type="ChEBI" id="CHEBI:37565"/>
    </ligand>
</feature>
<feature type="binding site" description="in other chain" evidence="1">
    <location>
        <begin position="13"/>
        <end position="16"/>
    </location>
    <ligand>
        <name>IMP</name>
        <dbReference type="ChEBI" id="CHEBI:58053"/>
        <note>ligand shared between dimeric partners</note>
    </ligand>
</feature>
<feature type="binding site" evidence="1">
    <location>
        <position position="13"/>
    </location>
    <ligand>
        <name>Mg(2+)</name>
        <dbReference type="ChEBI" id="CHEBI:18420"/>
    </ligand>
</feature>
<feature type="binding site" description="in other chain" evidence="1">
    <location>
        <begin position="38"/>
        <end position="41"/>
    </location>
    <ligand>
        <name>IMP</name>
        <dbReference type="ChEBI" id="CHEBI:58053"/>
        <note>ligand shared between dimeric partners</note>
    </ligand>
</feature>
<feature type="binding site" evidence="1">
    <location>
        <begin position="40"/>
        <end position="42"/>
    </location>
    <ligand>
        <name>GTP</name>
        <dbReference type="ChEBI" id="CHEBI:37565"/>
    </ligand>
</feature>
<feature type="binding site" evidence="1">
    <location>
        <position position="40"/>
    </location>
    <ligand>
        <name>Mg(2+)</name>
        <dbReference type="ChEBI" id="CHEBI:18420"/>
    </ligand>
</feature>
<feature type="binding site" description="in other chain" evidence="1">
    <location>
        <position position="126"/>
    </location>
    <ligand>
        <name>IMP</name>
        <dbReference type="ChEBI" id="CHEBI:58053"/>
        <note>ligand shared between dimeric partners</note>
    </ligand>
</feature>
<feature type="binding site" evidence="1">
    <location>
        <position position="140"/>
    </location>
    <ligand>
        <name>IMP</name>
        <dbReference type="ChEBI" id="CHEBI:58053"/>
        <note>ligand shared between dimeric partners</note>
    </ligand>
</feature>
<feature type="binding site" description="in other chain" evidence="1">
    <location>
        <position position="221"/>
    </location>
    <ligand>
        <name>IMP</name>
        <dbReference type="ChEBI" id="CHEBI:58053"/>
        <note>ligand shared between dimeric partners</note>
    </ligand>
</feature>
<feature type="binding site" description="in other chain" evidence="1">
    <location>
        <position position="236"/>
    </location>
    <ligand>
        <name>IMP</name>
        <dbReference type="ChEBI" id="CHEBI:58053"/>
        <note>ligand shared between dimeric partners</note>
    </ligand>
</feature>
<feature type="binding site" evidence="1">
    <location>
        <begin position="296"/>
        <end position="302"/>
    </location>
    <ligand>
        <name>substrate</name>
    </ligand>
</feature>
<feature type="binding site" description="in other chain" evidence="1">
    <location>
        <position position="300"/>
    </location>
    <ligand>
        <name>IMP</name>
        <dbReference type="ChEBI" id="CHEBI:58053"/>
        <note>ligand shared between dimeric partners</note>
    </ligand>
</feature>
<feature type="binding site" evidence="1">
    <location>
        <position position="302"/>
    </location>
    <ligand>
        <name>GTP</name>
        <dbReference type="ChEBI" id="CHEBI:37565"/>
    </ligand>
</feature>
<feature type="binding site" evidence="1">
    <location>
        <begin position="328"/>
        <end position="330"/>
    </location>
    <ligand>
        <name>GTP</name>
        <dbReference type="ChEBI" id="CHEBI:37565"/>
    </ligand>
</feature>
<feature type="binding site" evidence="1">
    <location>
        <begin position="410"/>
        <end position="412"/>
    </location>
    <ligand>
        <name>GTP</name>
        <dbReference type="ChEBI" id="CHEBI:37565"/>
    </ligand>
</feature>
<evidence type="ECO:0000255" key="1">
    <source>
        <dbReference type="HAMAP-Rule" id="MF_00011"/>
    </source>
</evidence>
<organism>
    <name type="scientific">Thermodesulfovibrio yellowstonii (strain ATCC 51303 / DSM 11347 / YP87)</name>
    <dbReference type="NCBI Taxonomy" id="289376"/>
    <lineage>
        <taxon>Bacteria</taxon>
        <taxon>Pseudomonadati</taxon>
        <taxon>Nitrospirota</taxon>
        <taxon>Thermodesulfovibrionia</taxon>
        <taxon>Thermodesulfovibrionales</taxon>
        <taxon>Thermodesulfovibrionaceae</taxon>
        <taxon>Thermodesulfovibrio</taxon>
    </lineage>
</organism>
<proteinExistence type="inferred from homology"/>
<keyword id="KW-0963">Cytoplasm</keyword>
<keyword id="KW-0342">GTP-binding</keyword>
<keyword id="KW-0436">Ligase</keyword>
<keyword id="KW-0460">Magnesium</keyword>
<keyword id="KW-0479">Metal-binding</keyword>
<keyword id="KW-0547">Nucleotide-binding</keyword>
<keyword id="KW-0658">Purine biosynthesis</keyword>
<keyword id="KW-1185">Reference proteome</keyword>
<sequence>MSTVVIIGAQWGDEGKGKIVDFLTEKCDYVVRFQGGCNAGHTVVVGEEKYILHLIPSGILHKNKKCIIGNGVVLDPSGLLKEIETLTQKGVEIDNNLYIAKHCHLIMPYHVAIEEQSEKKKKIGTTKKGIGPCYTDKIARNGVRMIDLLYPDVLKNKIRANLEIINFLLKNLYNAETLDETEILTQYLNYAEKLKKYIADADILINKAIDSGKKVLFEGAQGTLLDIDHGTYPYVTSSNTIAGGACTGAGVSPRKIDNIIGIVKAYTTRVGEGPFPTEIKDSLGEEIRKRGGEYGATTGRPRRCGWLDLVGLRHAVRVNGFTGLAITKLDILDGIEKLKVCVGYKYGNSILEDFPKEIQILEDCMPVYEEFQGWKESTAGIKNYEKLPDNAKKYLKFIEDSLKVKIQIISTGQKRDEIIIKESPL</sequence>
<comment type="function">
    <text evidence="1">Plays an important role in the de novo pathway of purine nucleotide biosynthesis. Catalyzes the first committed step in the biosynthesis of AMP from IMP.</text>
</comment>
<comment type="catalytic activity">
    <reaction evidence="1">
        <text>IMP + L-aspartate + GTP = N(6)-(1,2-dicarboxyethyl)-AMP + GDP + phosphate + 2 H(+)</text>
        <dbReference type="Rhea" id="RHEA:15753"/>
        <dbReference type="ChEBI" id="CHEBI:15378"/>
        <dbReference type="ChEBI" id="CHEBI:29991"/>
        <dbReference type="ChEBI" id="CHEBI:37565"/>
        <dbReference type="ChEBI" id="CHEBI:43474"/>
        <dbReference type="ChEBI" id="CHEBI:57567"/>
        <dbReference type="ChEBI" id="CHEBI:58053"/>
        <dbReference type="ChEBI" id="CHEBI:58189"/>
        <dbReference type="EC" id="6.3.4.4"/>
    </reaction>
</comment>
<comment type="cofactor">
    <cofactor evidence="1">
        <name>Mg(2+)</name>
        <dbReference type="ChEBI" id="CHEBI:18420"/>
    </cofactor>
    <text evidence="1">Binds 1 Mg(2+) ion per subunit.</text>
</comment>
<comment type="pathway">
    <text evidence="1">Purine metabolism; AMP biosynthesis via de novo pathway; AMP from IMP: step 1/2.</text>
</comment>
<comment type="subunit">
    <text evidence="1">Homodimer.</text>
</comment>
<comment type="subcellular location">
    <subcellularLocation>
        <location evidence="1">Cytoplasm</location>
    </subcellularLocation>
</comment>
<comment type="similarity">
    <text evidence="1">Belongs to the adenylosuccinate synthetase family.</text>
</comment>
<dbReference type="EC" id="6.3.4.4" evidence="1"/>
<dbReference type="EMBL" id="CP001147">
    <property type="protein sequence ID" value="ACI20295.1"/>
    <property type="molecule type" value="Genomic_DNA"/>
</dbReference>
<dbReference type="RefSeq" id="WP_012545033.1">
    <property type="nucleotide sequence ID" value="NC_011296.1"/>
</dbReference>
<dbReference type="RefSeq" id="YP_002248774.1">
    <property type="nucleotide sequence ID" value="NC_011296.1"/>
</dbReference>
<dbReference type="SMR" id="B5YKK9"/>
<dbReference type="FunCoup" id="B5YKK9">
    <property type="interactions" value="457"/>
</dbReference>
<dbReference type="STRING" id="289376.THEYE_A0938"/>
<dbReference type="EnsemblBacteria" id="ACI20295">
    <property type="protein sequence ID" value="ACI20295"/>
    <property type="gene ID" value="THEYE_A0938"/>
</dbReference>
<dbReference type="KEGG" id="tye:THEYE_A0938"/>
<dbReference type="PATRIC" id="fig|289376.4.peg.924"/>
<dbReference type="eggNOG" id="COG0104">
    <property type="taxonomic scope" value="Bacteria"/>
</dbReference>
<dbReference type="HOGENOM" id="CLU_029848_0_0_0"/>
<dbReference type="InParanoid" id="B5YKK9"/>
<dbReference type="OrthoDB" id="9807553at2"/>
<dbReference type="UniPathway" id="UPA00075">
    <property type="reaction ID" value="UER00335"/>
</dbReference>
<dbReference type="Proteomes" id="UP000000718">
    <property type="component" value="Chromosome"/>
</dbReference>
<dbReference type="GO" id="GO:0005737">
    <property type="term" value="C:cytoplasm"/>
    <property type="evidence" value="ECO:0000318"/>
    <property type="project" value="GO_Central"/>
</dbReference>
<dbReference type="GO" id="GO:0004019">
    <property type="term" value="F:adenylosuccinate synthase activity"/>
    <property type="evidence" value="ECO:0000318"/>
    <property type="project" value="GO_Central"/>
</dbReference>
<dbReference type="GO" id="GO:0005525">
    <property type="term" value="F:GTP binding"/>
    <property type="evidence" value="ECO:0007669"/>
    <property type="project" value="UniProtKB-UniRule"/>
</dbReference>
<dbReference type="GO" id="GO:0000287">
    <property type="term" value="F:magnesium ion binding"/>
    <property type="evidence" value="ECO:0007669"/>
    <property type="project" value="UniProtKB-UniRule"/>
</dbReference>
<dbReference type="GO" id="GO:0044208">
    <property type="term" value="P:'de novo' AMP biosynthetic process"/>
    <property type="evidence" value="ECO:0000318"/>
    <property type="project" value="GO_Central"/>
</dbReference>
<dbReference type="GO" id="GO:0046040">
    <property type="term" value="P:IMP metabolic process"/>
    <property type="evidence" value="ECO:0000318"/>
    <property type="project" value="GO_Central"/>
</dbReference>
<dbReference type="CDD" id="cd03108">
    <property type="entry name" value="AdSS"/>
    <property type="match status" value="1"/>
</dbReference>
<dbReference type="FunFam" id="1.10.300.10:FF:000001">
    <property type="entry name" value="Adenylosuccinate synthetase"/>
    <property type="match status" value="1"/>
</dbReference>
<dbReference type="FunFam" id="3.90.170.10:FF:000001">
    <property type="entry name" value="Adenylosuccinate synthetase"/>
    <property type="match status" value="1"/>
</dbReference>
<dbReference type="Gene3D" id="3.40.440.10">
    <property type="entry name" value="Adenylosuccinate Synthetase, subunit A, domain 1"/>
    <property type="match status" value="1"/>
</dbReference>
<dbReference type="Gene3D" id="1.10.300.10">
    <property type="entry name" value="Adenylosuccinate Synthetase, subunit A, domain 2"/>
    <property type="match status" value="1"/>
</dbReference>
<dbReference type="Gene3D" id="3.90.170.10">
    <property type="entry name" value="Adenylosuccinate Synthetase, subunit A, domain 3"/>
    <property type="match status" value="1"/>
</dbReference>
<dbReference type="HAMAP" id="MF_00011">
    <property type="entry name" value="Adenylosucc_synth"/>
    <property type="match status" value="1"/>
</dbReference>
<dbReference type="InterPro" id="IPR018220">
    <property type="entry name" value="Adenylosuccin_syn_GTP-bd"/>
</dbReference>
<dbReference type="InterPro" id="IPR033128">
    <property type="entry name" value="Adenylosuccin_syn_Lys_AS"/>
</dbReference>
<dbReference type="InterPro" id="IPR042109">
    <property type="entry name" value="Adenylosuccinate_synth_dom1"/>
</dbReference>
<dbReference type="InterPro" id="IPR042110">
    <property type="entry name" value="Adenylosuccinate_synth_dom2"/>
</dbReference>
<dbReference type="InterPro" id="IPR042111">
    <property type="entry name" value="Adenylosuccinate_synth_dom3"/>
</dbReference>
<dbReference type="InterPro" id="IPR001114">
    <property type="entry name" value="Adenylosuccinate_synthetase"/>
</dbReference>
<dbReference type="InterPro" id="IPR027417">
    <property type="entry name" value="P-loop_NTPase"/>
</dbReference>
<dbReference type="NCBIfam" id="NF002223">
    <property type="entry name" value="PRK01117.1"/>
    <property type="match status" value="1"/>
</dbReference>
<dbReference type="NCBIfam" id="NF010355">
    <property type="entry name" value="PRK13783.1"/>
    <property type="match status" value="1"/>
</dbReference>
<dbReference type="NCBIfam" id="TIGR00184">
    <property type="entry name" value="purA"/>
    <property type="match status" value="1"/>
</dbReference>
<dbReference type="PANTHER" id="PTHR11846">
    <property type="entry name" value="ADENYLOSUCCINATE SYNTHETASE"/>
    <property type="match status" value="1"/>
</dbReference>
<dbReference type="PANTHER" id="PTHR11846:SF0">
    <property type="entry name" value="ADENYLOSUCCINATE SYNTHETASE"/>
    <property type="match status" value="1"/>
</dbReference>
<dbReference type="Pfam" id="PF00709">
    <property type="entry name" value="Adenylsucc_synt"/>
    <property type="match status" value="1"/>
</dbReference>
<dbReference type="SMART" id="SM00788">
    <property type="entry name" value="Adenylsucc_synt"/>
    <property type="match status" value="1"/>
</dbReference>
<dbReference type="SUPFAM" id="SSF52540">
    <property type="entry name" value="P-loop containing nucleoside triphosphate hydrolases"/>
    <property type="match status" value="1"/>
</dbReference>
<dbReference type="PROSITE" id="PS01266">
    <property type="entry name" value="ADENYLOSUCCIN_SYN_1"/>
    <property type="match status" value="1"/>
</dbReference>
<dbReference type="PROSITE" id="PS00513">
    <property type="entry name" value="ADENYLOSUCCIN_SYN_2"/>
    <property type="match status" value="1"/>
</dbReference>
<gene>
    <name evidence="1" type="primary">purA</name>
    <name type="ordered locus">THEYE_A0938</name>
</gene>
<protein>
    <recommendedName>
        <fullName evidence="1">Adenylosuccinate synthetase</fullName>
        <shortName evidence="1">AMPSase</shortName>
        <shortName evidence="1">AdSS</shortName>
        <ecNumber evidence="1">6.3.4.4</ecNumber>
    </recommendedName>
    <alternativeName>
        <fullName evidence="1">IMP--aspartate ligase</fullName>
    </alternativeName>
</protein>